<gene>
    <name evidence="1" type="primary">aroA</name>
    <name type="ordered locus">LACR_1907</name>
</gene>
<keyword id="KW-0028">Amino-acid biosynthesis</keyword>
<keyword id="KW-0057">Aromatic amino acid biosynthesis</keyword>
<keyword id="KW-0963">Cytoplasm</keyword>
<keyword id="KW-0808">Transferase</keyword>
<organism>
    <name type="scientific">Lactococcus lactis subsp. cremoris (strain SK11)</name>
    <dbReference type="NCBI Taxonomy" id="272622"/>
    <lineage>
        <taxon>Bacteria</taxon>
        <taxon>Bacillati</taxon>
        <taxon>Bacillota</taxon>
        <taxon>Bacilli</taxon>
        <taxon>Lactobacillales</taxon>
        <taxon>Streptococcaceae</taxon>
        <taxon>Lactococcus</taxon>
        <taxon>Lactococcus cremoris subsp. cremoris</taxon>
    </lineage>
</organism>
<dbReference type="EC" id="2.5.1.19" evidence="1"/>
<dbReference type="EMBL" id="CP000425">
    <property type="protein sequence ID" value="ABJ73391.1"/>
    <property type="molecule type" value="Genomic_DNA"/>
</dbReference>
<dbReference type="RefSeq" id="WP_011676739.1">
    <property type="nucleotide sequence ID" value="NC_008527.1"/>
</dbReference>
<dbReference type="SMR" id="Q02XD1"/>
<dbReference type="KEGG" id="llc:LACR_1907"/>
<dbReference type="HOGENOM" id="CLU_024321_0_1_9"/>
<dbReference type="UniPathway" id="UPA00053">
    <property type="reaction ID" value="UER00089"/>
</dbReference>
<dbReference type="Proteomes" id="UP000000240">
    <property type="component" value="Chromosome"/>
</dbReference>
<dbReference type="GO" id="GO:0005737">
    <property type="term" value="C:cytoplasm"/>
    <property type="evidence" value="ECO:0007669"/>
    <property type="project" value="UniProtKB-SubCell"/>
</dbReference>
<dbReference type="GO" id="GO:0003866">
    <property type="term" value="F:3-phosphoshikimate 1-carboxyvinyltransferase activity"/>
    <property type="evidence" value="ECO:0007669"/>
    <property type="project" value="UniProtKB-UniRule"/>
</dbReference>
<dbReference type="GO" id="GO:0008652">
    <property type="term" value="P:amino acid biosynthetic process"/>
    <property type="evidence" value="ECO:0007669"/>
    <property type="project" value="UniProtKB-KW"/>
</dbReference>
<dbReference type="GO" id="GO:0009073">
    <property type="term" value="P:aromatic amino acid family biosynthetic process"/>
    <property type="evidence" value="ECO:0007669"/>
    <property type="project" value="UniProtKB-KW"/>
</dbReference>
<dbReference type="GO" id="GO:0009423">
    <property type="term" value="P:chorismate biosynthetic process"/>
    <property type="evidence" value="ECO:0007669"/>
    <property type="project" value="UniProtKB-UniRule"/>
</dbReference>
<dbReference type="CDD" id="cd01556">
    <property type="entry name" value="EPSP_synthase"/>
    <property type="match status" value="1"/>
</dbReference>
<dbReference type="FunFam" id="3.65.10.10:FF:000005">
    <property type="entry name" value="3-phosphoshikimate 1-carboxyvinyltransferase"/>
    <property type="match status" value="1"/>
</dbReference>
<dbReference type="FunFam" id="3.65.10.10:FF:000006">
    <property type="entry name" value="3-phosphoshikimate 1-carboxyvinyltransferase"/>
    <property type="match status" value="1"/>
</dbReference>
<dbReference type="Gene3D" id="3.65.10.10">
    <property type="entry name" value="Enolpyruvate transferase domain"/>
    <property type="match status" value="2"/>
</dbReference>
<dbReference type="HAMAP" id="MF_00210">
    <property type="entry name" value="EPSP_synth"/>
    <property type="match status" value="1"/>
</dbReference>
<dbReference type="InterPro" id="IPR001986">
    <property type="entry name" value="Enolpyruvate_Tfrase_dom"/>
</dbReference>
<dbReference type="InterPro" id="IPR036968">
    <property type="entry name" value="Enolpyruvate_Tfrase_sf"/>
</dbReference>
<dbReference type="InterPro" id="IPR006264">
    <property type="entry name" value="EPSP_synthase"/>
</dbReference>
<dbReference type="InterPro" id="IPR023193">
    <property type="entry name" value="EPSP_synthase_CS"/>
</dbReference>
<dbReference type="InterPro" id="IPR013792">
    <property type="entry name" value="RNA3'P_cycl/enolpyr_Trfase_a/b"/>
</dbReference>
<dbReference type="NCBIfam" id="TIGR01356">
    <property type="entry name" value="aroA"/>
    <property type="match status" value="1"/>
</dbReference>
<dbReference type="PANTHER" id="PTHR21090">
    <property type="entry name" value="AROM/DEHYDROQUINATE SYNTHASE"/>
    <property type="match status" value="1"/>
</dbReference>
<dbReference type="PANTHER" id="PTHR21090:SF5">
    <property type="entry name" value="PENTAFUNCTIONAL AROM POLYPEPTIDE"/>
    <property type="match status" value="1"/>
</dbReference>
<dbReference type="Pfam" id="PF00275">
    <property type="entry name" value="EPSP_synthase"/>
    <property type="match status" value="1"/>
</dbReference>
<dbReference type="PIRSF" id="PIRSF000505">
    <property type="entry name" value="EPSPS"/>
    <property type="match status" value="1"/>
</dbReference>
<dbReference type="SUPFAM" id="SSF55205">
    <property type="entry name" value="EPT/RTPC-like"/>
    <property type="match status" value="1"/>
</dbReference>
<dbReference type="PROSITE" id="PS00104">
    <property type="entry name" value="EPSP_SYNTHASE_1"/>
    <property type="match status" value="1"/>
</dbReference>
<dbReference type="PROSITE" id="PS00885">
    <property type="entry name" value="EPSP_SYNTHASE_2"/>
    <property type="match status" value="1"/>
</dbReference>
<comment type="function">
    <text evidence="1">Catalyzes the transfer of the enolpyruvyl moiety of phosphoenolpyruvate (PEP) to the 5-hydroxyl of shikimate-3-phosphate (S3P) to produce enolpyruvyl shikimate-3-phosphate and inorganic phosphate.</text>
</comment>
<comment type="catalytic activity">
    <reaction evidence="1">
        <text>3-phosphoshikimate + phosphoenolpyruvate = 5-O-(1-carboxyvinyl)-3-phosphoshikimate + phosphate</text>
        <dbReference type="Rhea" id="RHEA:21256"/>
        <dbReference type="ChEBI" id="CHEBI:43474"/>
        <dbReference type="ChEBI" id="CHEBI:57701"/>
        <dbReference type="ChEBI" id="CHEBI:58702"/>
        <dbReference type="ChEBI" id="CHEBI:145989"/>
        <dbReference type="EC" id="2.5.1.19"/>
    </reaction>
    <physiologicalReaction direction="left-to-right" evidence="1">
        <dbReference type="Rhea" id="RHEA:21257"/>
    </physiologicalReaction>
</comment>
<comment type="pathway">
    <text evidence="1">Metabolic intermediate biosynthesis; chorismate biosynthesis; chorismate from D-erythrose 4-phosphate and phosphoenolpyruvate: step 6/7.</text>
</comment>
<comment type="subunit">
    <text evidence="1">Monomer.</text>
</comment>
<comment type="subcellular location">
    <subcellularLocation>
        <location evidence="1">Cytoplasm</location>
    </subcellularLocation>
</comment>
<comment type="similarity">
    <text evidence="1">Belongs to the EPSP synthase family.</text>
</comment>
<feature type="chain" id="PRO_1000012446" description="3-phosphoshikimate 1-carboxyvinyltransferase">
    <location>
        <begin position="1"/>
        <end position="430"/>
    </location>
</feature>
<feature type="active site" description="Proton acceptor" evidence="1">
    <location>
        <position position="312"/>
    </location>
</feature>
<feature type="binding site" evidence="1">
    <location>
        <position position="20"/>
    </location>
    <ligand>
        <name>3-phosphoshikimate</name>
        <dbReference type="ChEBI" id="CHEBI:145989"/>
    </ligand>
</feature>
<feature type="binding site" evidence="1">
    <location>
        <position position="20"/>
    </location>
    <ligand>
        <name>phosphoenolpyruvate</name>
        <dbReference type="ChEBI" id="CHEBI:58702"/>
    </ligand>
</feature>
<feature type="binding site" evidence="1">
    <location>
        <position position="21"/>
    </location>
    <ligand>
        <name>3-phosphoshikimate</name>
        <dbReference type="ChEBI" id="CHEBI:145989"/>
    </ligand>
</feature>
<feature type="binding site" evidence="1">
    <location>
        <position position="25"/>
    </location>
    <ligand>
        <name>3-phosphoshikimate</name>
        <dbReference type="ChEBI" id="CHEBI:145989"/>
    </ligand>
</feature>
<feature type="binding site" evidence="1">
    <location>
        <position position="92"/>
    </location>
    <ligand>
        <name>phosphoenolpyruvate</name>
        <dbReference type="ChEBI" id="CHEBI:58702"/>
    </ligand>
</feature>
<feature type="binding site" evidence="1">
    <location>
        <position position="120"/>
    </location>
    <ligand>
        <name>phosphoenolpyruvate</name>
        <dbReference type="ChEBI" id="CHEBI:58702"/>
    </ligand>
</feature>
<feature type="binding site" evidence="1">
    <location>
        <position position="166"/>
    </location>
    <ligand>
        <name>3-phosphoshikimate</name>
        <dbReference type="ChEBI" id="CHEBI:145989"/>
    </ligand>
</feature>
<feature type="binding site" evidence="1">
    <location>
        <position position="168"/>
    </location>
    <ligand>
        <name>3-phosphoshikimate</name>
        <dbReference type="ChEBI" id="CHEBI:145989"/>
    </ligand>
</feature>
<feature type="binding site" evidence="1">
    <location>
        <position position="168"/>
    </location>
    <ligand>
        <name>phosphoenolpyruvate</name>
        <dbReference type="ChEBI" id="CHEBI:58702"/>
    </ligand>
</feature>
<feature type="binding site" evidence="1">
    <location>
        <position position="312"/>
    </location>
    <ligand>
        <name>3-phosphoshikimate</name>
        <dbReference type="ChEBI" id="CHEBI:145989"/>
    </ligand>
</feature>
<feature type="binding site" evidence="1">
    <location>
        <position position="339"/>
    </location>
    <ligand>
        <name>3-phosphoshikimate</name>
        <dbReference type="ChEBI" id="CHEBI:145989"/>
    </ligand>
</feature>
<feature type="binding site" evidence="1">
    <location>
        <position position="343"/>
    </location>
    <ligand>
        <name>phosphoenolpyruvate</name>
        <dbReference type="ChEBI" id="CHEBI:58702"/>
    </ligand>
</feature>
<feature type="binding site" evidence="1">
    <location>
        <position position="387"/>
    </location>
    <ligand>
        <name>phosphoenolpyruvate</name>
        <dbReference type="ChEBI" id="CHEBI:58702"/>
    </ligand>
</feature>
<accession>Q02XD1</accession>
<evidence type="ECO:0000255" key="1">
    <source>
        <dbReference type="HAMAP-Rule" id="MF_00210"/>
    </source>
</evidence>
<sequence>MKLKINSQGLKGHLKVPGDKSISHRSIMFGSIAKGKTIIHDILRGEDVLSTIEAFRALGVEIEDDGQVITVHGQGISKLKEPEKALDMGNSGTSTRLLSGILAGLPFETTLFGDDSLSKRPMDRVATPLQMMGAEIVGQTDKVKLPMTIKGSAHLKAIDYVLPVASAQVKSAVIFAALQAEGLTKVVEKEKTRSHTEEMLVQFGGEIKVSDKTSLVPGGQKLMGQEVTVPGDISSAAFWLVAGLVVENSELILENVGINETRTGILEVIQAMGGQLEILEQDEVAKAATLKVKASQLKGTEISGDLIPRLIDELPIIALLATQAEGKTIIRDAAELKVKETDRIAVVADALNSMGANIEPTDDGMIIQGGTKLHAPENAINTLGDHRIGMMVAIAALLVENGEIELERAEAIQTSYPSFFDDLEKLSENL</sequence>
<protein>
    <recommendedName>
        <fullName evidence="1">3-phosphoshikimate 1-carboxyvinyltransferase</fullName>
        <ecNumber evidence="1">2.5.1.19</ecNumber>
    </recommendedName>
    <alternativeName>
        <fullName evidence="1">5-enolpyruvylshikimate-3-phosphate synthase</fullName>
        <shortName evidence="1">EPSP synthase</shortName>
        <shortName evidence="1">EPSPS</shortName>
    </alternativeName>
</protein>
<name>AROA_LACLS</name>
<proteinExistence type="inferred from homology"/>
<reference key="1">
    <citation type="journal article" date="2006" name="Proc. Natl. Acad. Sci. U.S.A.">
        <title>Comparative genomics of the lactic acid bacteria.</title>
        <authorList>
            <person name="Makarova K.S."/>
            <person name="Slesarev A."/>
            <person name="Wolf Y.I."/>
            <person name="Sorokin A."/>
            <person name="Mirkin B."/>
            <person name="Koonin E.V."/>
            <person name="Pavlov A."/>
            <person name="Pavlova N."/>
            <person name="Karamychev V."/>
            <person name="Polouchine N."/>
            <person name="Shakhova V."/>
            <person name="Grigoriev I."/>
            <person name="Lou Y."/>
            <person name="Rohksar D."/>
            <person name="Lucas S."/>
            <person name="Huang K."/>
            <person name="Goodstein D.M."/>
            <person name="Hawkins T."/>
            <person name="Plengvidhya V."/>
            <person name="Welker D."/>
            <person name="Hughes J."/>
            <person name="Goh Y."/>
            <person name="Benson A."/>
            <person name="Baldwin K."/>
            <person name="Lee J.-H."/>
            <person name="Diaz-Muniz I."/>
            <person name="Dosti B."/>
            <person name="Smeianov V."/>
            <person name="Wechter W."/>
            <person name="Barabote R."/>
            <person name="Lorca G."/>
            <person name="Altermann E."/>
            <person name="Barrangou R."/>
            <person name="Ganesan B."/>
            <person name="Xie Y."/>
            <person name="Rawsthorne H."/>
            <person name="Tamir D."/>
            <person name="Parker C."/>
            <person name="Breidt F."/>
            <person name="Broadbent J.R."/>
            <person name="Hutkins R."/>
            <person name="O'Sullivan D."/>
            <person name="Steele J."/>
            <person name="Unlu G."/>
            <person name="Saier M.H. Jr."/>
            <person name="Klaenhammer T."/>
            <person name="Richardson P."/>
            <person name="Kozyavkin S."/>
            <person name="Weimer B.C."/>
            <person name="Mills D.A."/>
        </authorList>
    </citation>
    <scope>NUCLEOTIDE SEQUENCE [LARGE SCALE GENOMIC DNA]</scope>
    <source>
        <strain>SK11</strain>
    </source>
</reference>